<proteinExistence type="evidence at protein level"/>
<protein>
    <recommendedName>
        <fullName>Endopolygalacturonase II</fullName>
        <shortName>EPG-II</shortName>
        <ecNumber>3.2.1.15</ecNumber>
    </recommendedName>
    <alternativeName>
        <fullName>Pectinase 2</fullName>
    </alternativeName>
    <alternativeName>
        <fullName>Polygalacturonase II</fullName>
        <shortName>PG-II</shortName>
    </alternativeName>
    <alternativeName>
        <fullName>Polygalacturonase X2</fullName>
    </alternativeName>
</protein>
<comment type="function">
    <text evidence="4">Involved in maceration and soft-rotting of plant tissue. Hydrolyzes the 1,4-alpha glycosidic bonds of de-esterified pectate in the smooth region of the plant cell wall.</text>
</comment>
<comment type="catalytic activity">
    <reaction>
        <text>(1,4-alpha-D-galacturonosyl)n+m + H2O = (1,4-alpha-D-galacturonosyl)n + (1,4-alpha-D-galacturonosyl)m.</text>
        <dbReference type="EC" id="3.2.1.15"/>
    </reaction>
</comment>
<comment type="biophysicochemical properties">
    <phDependence>
        <text evidence="4">Optimum pH is 5.0. Stable between pH 4.0 and 6.0.</text>
    </phDependence>
    <temperatureDependence>
        <text evidence="4">Optimum temperature is 40 degrees Celsius.</text>
    </temperatureDependence>
</comment>
<comment type="subcellular location">
    <subcellularLocation>
        <location evidence="5">Secreted</location>
    </subcellularLocation>
</comment>
<comment type="induction">
    <text evidence="4">Expression depends of ambient pH (higher at high pHs and lower at low pHs), probably under the regulation of the pacC transcription factor.</text>
</comment>
<comment type="similarity">
    <text evidence="5">Belongs to the glycosyl hydrolase 28 family.</text>
</comment>
<feature type="signal peptide" evidence="2">
    <location>
        <begin position="1"/>
        <end position="20"/>
    </location>
</feature>
<feature type="propeptide" id="PRO_0000393628" evidence="2">
    <location>
        <begin position="21"/>
        <end position="27"/>
    </location>
</feature>
<feature type="chain" id="PRO_0000393629" description="Endopolygalacturonase II">
    <location>
        <begin position="28"/>
        <end position="362"/>
    </location>
</feature>
<feature type="repeat" description="PbH1 1">
    <location>
        <begin position="156"/>
        <end position="186"/>
    </location>
</feature>
<feature type="repeat" description="PbH1 2">
    <location>
        <begin position="209"/>
        <end position="229"/>
    </location>
</feature>
<feature type="repeat" description="PbH1 3">
    <location>
        <begin position="238"/>
        <end position="259"/>
    </location>
</feature>
<feature type="repeat" description="PbH1 4">
    <location>
        <begin position="267"/>
        <end position="289"/>
    </location>
</feature>
<feature type="repeat" description="PbH1 5">
    <location>
        <begin position="301"/>
        <end position="322"/>
    </location>
</feature>
<feature type="active site" description="Proton donor" evidence="3">
    <location>
        <position position="201"/>
    </location>
</feature>
<feature type="active site" evidence="3">
    <location>
        <position position="223"/>
    </location>
</feature>
<feature type="glycosylation site" description="N-linked (GlcNAc...) asparagine" evidence="2">
    <location>
        <position position="240"/>
    </location>
</feature>
<feature type="disulfide bond" evidence="1">
    <location>
        <begin position="30"/>
        <end position="45"/>
    </location>
</feature>
<feature type="disulfide bond" evidence="1">
    <location>
        <begin position="203"/>
        <end position="219"/>
    </location>
</feature>
<feature type="disulfide bond" evidence="1">
    <location>
        <begin position="329"/>
        <end position="334"/>
    </location>
</feature>
<feature type="disulfide bond" evidence="1">
    <location>
        <begin position="353"/>
        <end position="362"/>
    </location>
</feature>
<evidence type="ECO:0000250" key="1"/>
<evidence type="ECO:0000255" key="2"/>
<evidence type="ECO:0000255" key="3">
    <source>
        <dbReference type="PROSITE-ProRule" id="PRU10052"/>
    </source>
</evidence>
<evidence type="ECO:0000269" key="4">
    <source>
    </source>
</evidence>
<evidence type="ECO:0000305" key="5"/>
<name>PGLR2_ASPAW</name>
<accession>Q9P359</accession>
<keyword id="KW-0961">Cell wall biogenesis/degradation</keyword>
<keyword id="KW-0903">Direct protein sequencing</keyword>
<keyword id="KW-1015">Disulfide bond</keyword>
<keyword id="KW-0325">Glycoprotein</keyword>
<keyword id="KW-0326">Glycosidase</keyword>
<keyword id="KW-0378">Hydrolase</keyword>
<keyword id="KW-0677">Repeat</keyword>
<keyword id="KW-0964">Secreted</keyword>
<keyword id="KW-0732">Signal</keyword>
<keyword id="KW-0865">Zymogen</keyword>
<sequence length="362" mass="37625">MHSFASLLRYGLAAGATLASASPIEARDSCTFTTAAAAKAGKAKCSTITLDSIKVPAGTTLDLTGLTSGTKVIFEGTTTFDYEDWAGPLISMSGKDITVTGASGHLINCDGSRWWDGKGTSGKKKPKFFYAHGLDSSSITGLNIKNTPLMAFSVESDDITLTDITINNADGDSLGGHNTDAFDVGNSVGVNIIKPWVHNQDDCLAINSGENIWFTGGTCIGGHGLSIGSVGDRSNNVVKNVTIEHSTVSNSENAVRIKTISGATGSVSEITYSNIVMSGISDYGVVIQQDYEDGKPTGKPTNGVTITDVKLESVTGTVDSKATDIYLLCGSGSCSDWTWDDVKVTGGKKSSACKNLPSVASC</sequence>
<gene>
    <name type="primary">pgaII</name>
    <name type="synonym">pg2</name>
    <name type="synonym">pgx2</name>
</gene>
<dbReference type="EC" id="3.2.1.15"/>
<dbReference type="EMBL" id="AB035081">
    <property type="protein sequence ID" value="BAA95407.1"/>
    <property type="molecule type" value="Genomic_DNA"/>
</dbReference>
<dbReference type="PIR" id="JC7374">
    <property type="entry name" value="JC7374"/>
</dbReference>
<dbReference type="SMR" id="Q9P359"/>
<dbReference type="CAZy" id="GH28">
    <property type="family name" value="Glycoside Hydrolase Family 28"/>
</dbReference>
<dbReference type="GlyCosmos" id="Q9P359">
    <property type="glycosylation" value="1 site, No reported glycans"/>
</dbReference>
<dbReference type="GO" id="GO:0005576">
    <property type="term" value="C:extracellular region"/>
    <property type="evidence" value="ECO:0000314"/>
    <property type="project" value="UniProtKB"/>
</dbReference>
<dbReference type="GO" id="GO:0004650">
    <property type="term" value="F:polygalacturonase activity"/>
    <property type="evidence" value="ECO:0000314"/>
    <property type="project" value="UniProtKB"/>
</dbReference>
<dbReference type="GO" id="GO:0071555">
    <property type="term" value="P:cell wall organization"/>
    <property type="evidence" value="ECO:0007669"/>
    <property type="project" value="UniProtKB-KW"/>
</dbReference>
<dbReference type="GO" id="GO:0045490">
    <property type="term" value="P:pectin catabolic process"/>
    <property type="evidence" value="ECO:0000314"/>
    <property type="project" value="UniProtKB"/>
</dbReference>
<dbReference type="FunFam" id="2.160.20.10:FF:000002">
    <property type="entry name" value="Endopolygalacturonase D"/>
    <property type="match status" value="1"/>
</dbReference>
<dbReference type="Gene3D" id="2.160.20.10">
    <property type="entry name" value="Single-stranded right-handed beta-helix, Pectin lyase-like"/>
    <property type="match status" value="1"/>
</dbReference>
<dbReference type="InterPro" id="IPR000743">
    <property type="entry name" value="Glyco_hydro_28"/>
</dbReference>
<dbReference type="InterPro" id="IPR050434">
    <property type="entry name" value="Glycosyl_hydrlase_28"/>
</dbReference>
<dbReference type="InterPro" id="IPR006626">
    <property type="entry name" value="PbH1"/>
</dbReference>
<dbReference type="InterPro" id="IPR012334">
    <property type="entry name" value="Pectin_lyas_fold"/>
</dbReference>
<dbReference type="InterPro" id="IPR011050">
    <property type="entry name" value="Pectin_lyase_fold/virulence"/>
</dbReference>
<dbReference type="PANTHER" id="PTHR31884:SF13">
    <property type="entry name" value="ENDOPOLYGALACTURONASE B"/>
    <property type="match status" value="1"/>
</dbReference>
<dbReference type="PANTHER" id="PTHR31884">
    <property type="entry name" value="POLYGALACTURONASE"/>
    <property type="match status" value="1"/>
</dbReference>
<dbReference type="Pfam" id="PF00295">
    <property type="entry name" value="Glyco_hydro_28"/>
    <property type="match status" value="1"/>
</dbReference>
<dbReference type="SMART" id="SM00710">
    <property type="entry name" value="PbH1"/>
    <property type="match status" value="5"/>
</dbReference>
<dbReference type="SUPFAM" id="SSF51126">
    <property type="entry name" value="Pectin lyase-like"/>
    <property type="match status" value="1"/>
</dbReference>
<dbReference type="PROSITE" id="PS00502">
    <property type="entry name" value="POLYGALACTURONASE"/>
    <property type="match status" value="1"/>
</dbReference>
<organism>
    <name type="scientific">Aspergillus awamori</name>
    <name type="common">Black koji mold</name>
    <dbReference type="NCBI Taxonomy" id="105351"/>
    <lineage>
        <taxon>Eukaryota</taxon>
        <taxon>Fungi</taxon>
        <taxon>Dikarya</taxon>
        <taxon>Ascomycota</taxon>
        <taxon>Pezizomycotina</taxon>
        <taxon>Eurotiomycetes</taxon>
        <taxon>Eurotiomycetidae</taxon>
        <taxon>Eurotiales</taxon>
        <taxon>Aspergillaceae</taxon>
        <taxon>Aspergillus</taxon>
    </lineage>
</organism>
<reference key="1">
    <citation type="journal article" date="2000" name="Biosci. Biotechnol. Biochem.">
        <title>Cloning and heterologous expression of gene encoding A polygalacturonase from Aspergillus awamori.</title>
        <authorList>
            <person name="Nagai M."/>
            <person name="Ozawa A."/>
            <person name="Katsuragi T."/>
            <person name="Kawasaki H."/>
            <person name="Sakai T."/>
        </authorList>
    </citation>
    <scope>NUCLEOTIDE SEQUENCE [GENOMIC DNA]</scope>
    <scope>PROTEIN SEQUENCE OF 28-34</scope>
    <scope>FUNCTION</scope>
    <scope>BIOPHYSICOCHEMICAL PROPERTIES</scope>
    <scope>INDUCTION</scope>
</reference>